<comment type="function">
    <text evidence="4">Insulin-regulated facilitative glucose transporter, which plays a key role in removal of glucose from circulation. Response to insulin is regulated by its intracellular localization: in the absence of insulin, it is efficiently retained intracellularly within storage compartments in muscle and fat cells. Upon insulin stimulation, translocates from these compartments to the cell surface where it transports glucose from the extracellular milieu into the cell.</text>
</comment>
<comment type="catalytic activity">
    <reaction evidence="4">
        <text>D-glucose(out) = D-glucose(in)</text>
        <dbReference type="Rhea" id="RHEA:60376"/>
        <dbReference type="ChEBI" id="CHEBI:4167"/>
    </reaction>
</comment>
<comment type="subunit">
    <text evidence="2 3 4">Binds to DAXX. Interacts via its N-terminus with SRFBP1 (By similarity). Interacts with NDUFA9 (By similarity). Interacts with TRARG1; the interaction is required for proper SLC2A4 recycling after insulin stimulation (By similarity).</text>
</comment>
<comment type="subcellular location">
    <subcellularLocation>
        <location evidence="2">Cell membrane</location>
        <topology evidence="2">Multi-pass membrane protein</topology>
    </subcellularLocation>
    <subcellularLocation>
        <location evidence="2">Endomembrane system</location>
        <topology evidence="2">Multi-pass membrane protein</topology>
    </subcellularLocation>
    <subcellularLocation>
        <location evidence="2">Cytoplasm</location>
        <location evidence="2">Perinuclear region</location>
    </subcellularLocation>
    <text evidence="2 3">Localizes primarily to the perinuclear region, undergoing continued recycling to the plasma membrane where it is rapidly reinternalized (By similarity). The dileucine internalization motif is critical for intracellular sequestration (By similarity). Insulin stimulation induces translocation to the cell membrane (By similarity).</text>
</comment>
<comment type="domain">
    <text evidence="3">The dileucine internalization motif is critical for intracellular sequestration.</text>
</comment>
<comment type="PTM">
    <text evidence="3">Sumoylated.</text>
</comment>
<comment type="PTM">
    <text evidence="3">Palmitoylated. Palmitoylation by ZDHHC7 controls the insulin-dependent translocation of GLUT4 to the plasma membrane.</text>
</comment>
<comment type="miscellaneous">
    <text evidence="2">Insulin-stimulated phosphorylation of TBC1D4 is required for GLUT4 translocation.</text>
</comment>
<comment type="similarity">
    <text evidence="7">Belongs to the major facilitator superfamily. Sugar transporter (TC 2.A.1.1) family. Glucose transporter subfamily.</text>
</comment>
<sequence>TSIFETAGVGQPAYATIGAGVVNTVFTLVSVFLVERAGRRTLHLLGLAGMCGCAILMTIALLLLERLPAMSYVSIVAIFGFVAFFEIGPGPIPWFIVAELFSQGPRPAAMAVAGFCNWTSNFIIGMGFQYIAXAMGPYVFLLFAVLLLAFFIFTFLKVPETR</sequence>
<keyword id="KW-1003">Cell membrane</keyword>
<keyword id="KW-0963">Cytoplasm</keyword>
<keyword id="KW-0449">Lipoprotein</keyword>
<keyword id="KW-0472">Membrane</keyword>
<keyword id="KW-0564">Palmitate</keyword>
<keyword id="KW-1185">Reference proteome</keyword>
<keyword id="KW-0762">Sugar transport</keyword>
<keyword id="KW-0812">Transmembrane</keyword>
<keyword id="KW-1133">Transmembrane helix</keyword>
<keyword id="KW-0813">Transport</keyword>
<keyword id="KW-0832">Ubl conjugation</keyword>
<dbReference type="EMBL" id="AJ388533">
    <property type="protein sequence ID" value="CAB46835.1"/>
    <property type="molecule type" value="mRNA"/>
</dbReference>
<dbReference type="RefSeq" id="NP_001152799.1">
    <property type="nucleotide sequence ID" value="NM_001159327.1"/>
</dbReference>
<dbReference type="FunCoup" id="Q9XST2">
    <property type="interactions" value="123"/>
</dbReference>
<dbReference type="STRING" id="9615.ENSCAFP00000003651"/>
<dbReference type="PaxDb" id="9612-ENSCAFP00000023753"/>
<dbReference type="GeneID" id="403673"/>
<dbReference type="KEGG" id="cfa:403673"/>
<dbReference type="CTD" id="6517"/>
<dbReference type="eggNOG" id="KOG0569">
    <property type="taxonomic scope" value="Eukaryota"/>
</dbReference>
<dbReference type="InParanoid" id="Q9XST2"/>
<dbReference type="OrthoDB" id="4540492at2759"/>
<dbReference type="Proteomes" id="UP000002254">
    <property type="component" value="Unplaced"/>
</dbReference>
<dbReference type="Proteomes" id="UP000694429">
    <property type="component" value="Unplaced"/>
</dbReference>
<dbReference type="Proteomes" id="UP000694542">
    <property type="component" value="Unplaced"/>
</dbReference>
<dbReference type="Proteomes" id="UP000805418">
    <property type="component" value="Unplaced"/>
</dbReference>
<dbReference type="GO" id="GO:0030659">
    <property type="term" value="C:cytoplasmic vesicle membrane"/>
    <property type="evidence" value="ECO:0000250"/>
    <property type="project" value="UniProtKB"/>
</dbReference>
<dbReference type="GO" id="GO:0012505">
    <property type="term" value="C:endomembrane system"/>
    <property type="evidence" value="ECO:0000250"/>
    <property type="project" value="UniProtKB"/>
</dbReference>
<dbReference type="GO" id="GO:0032593">
    <property type="term" value="C:insulin-responsive compartment"/>
    <property type="evidence" value="ECO:0000250"/>
    <property type="project" value="UniProtKB"/>
</dbReference>
<dbReference type="GO" id="GO:0048471">
    <property type="term" value="C:perinuclear region of cytoplasm"/>
    <property type="evidence" value="ECO:0000250"/>
    <property type="project" value="UniProtKB"/>
</dbReference>
<dbReference type="GO" id="GO:0005886">
    <property type="term" value="C:plasma membrane"/>
    <property type="evidence" value="ECO:0000250"/>
    <property type="project" value="UniProtKB"/>
</dbReference>
<dbReference type="GO" id="GO:0055056">
    <property type="term" value="F:D-glucose transmembrane transporter activity"/>
    <property type="evidence" value="ECO:0000250"/>
    <property type="project" value="UniProtKB"/>
</dbReference>
<dbReference type="GO" id="GO:0015304">
    <property type="term" value="F:D-glucose uniporter activity"/>
    <property type="evidence" value="ECO:0000250"/>
    <property type="project" value="UniProtKB"/>
</dbReference>
<dbReference type="GO" id="GO:1904659">
    <property type="term" value="P:D-glucose transmembrane transport"/>
    <property type="evidence" value="ECO:0000250"/>
    <property type="project" value="UniProtKB"/>
</dbReference>
<dbReference type="GO" id="GO:0044381">
    <property type="term" value="P:glucose import in response to insulin stimulus"/>
    <property type="evidence" value="ECO:0000250"/>
    <property type="project" value="UniProtKB"/>
</dbReference>
<dbReference type="Gene3D" id="1.20.1250.20">
    <property type="entry name" value="MFS general substrate transporter like domains"/>
    <property type="match status" value="1"/>
</dbReference>
<dbReference type="InterPro" id="IPR045263">
    <property type="entry name" value="GLUT"/>
</dbReference>
<dbReference type="InterPro" id="IPR020846">
    <property type="entry name" value="MFS_dom"/>
</dbReference>
<dbReference type="InterPro" id="IPR005828">
    <property type="entry name" value="MFS_sugar_transport-like"/>
</dbReference>
<dbReference type="InterPro" id="IPR036259">
    <property type="entry name" value="MFS_trans_sf"/>
</dbReference>
<dbReference type="InterPro" id="IPR003663">
    <property type="entry name" value="Sugar/inositol_transpt"/>
</dbReference>
<dbReference type="InterPro" id="IPR005829">
    <property type="entry name" value="Sugar_transporter_CS"/>
</dbReference>
<dbReference type="PANTHER" id="PTHR23503">
    <property type="entry name" value="SOLUTE CARRIER FAMILY 2"/>
    <property type="match status" value="1"/>
</dbReference>
<dbReference type="PANTHER" id="PTHR23503:SF120">
    <property type="entry name" value="SOLUTE CARRIER FAMILY 2, FACILITATED GLUCOSE TRANSPORTER MEMBER 4"/>
    <property type="match status" value="1"/>
</dbReference>
<dbReference type="Pfam" id="PF00083">
    <property type="entry name" value="Sugar_tr"/>
    <property type="match status" value="1"/>
</dbReference>
<dbReference type="PRINTS" id="PR00171">
    <property type="entry name" value="SUGRTRNSPORT"/>
</dbReference>
<dbReference type="SUPFAM" id="SSF103473">
    <property type="entry name" value="MFS general substrate transporter"/>
    <property type="match status" value="1"/>
</dbReference>
<dbReference type="PROSITE" id="PS50850">
    <property type="entry name" value="MFS"/>
    <property type="match status" value="1"/>
</dbReference>
<dbReference type="PROSITE" id="PS00216">
    <property type="entry name" value="SUGAR_TRANSPORT_1"/>
    <property type="match status" value="1"/>
</dbReference>
<evidence type="ECO:0000250" key="1">
    <source>
        <dbReference type="UniProtKB" id="P11169"/>
    </source>
</evidence>
<evidence type="ECO:0000250" key="2">
    <source>
        <dbReference type="UniProtKB" id="P14142"/>
    </source>
</evidence>
<evidence type="ECO:0000250" key="3">
    <source>
        <dbReference type="UniProtKB" id="P14672"/>
    </source>
</evidence>
<evidence type="ECO:0000250" key="4">
    <source>
        <dbReference type="UniProtKB" id="P19357"/>
    </source>
</evidence>
<evidence type="ECO:0000255" key="5"/>
<evidence type="ECO:0000303" key="6">
    <source>
    </source>
</evidence>
<evidence type="ECO:0000305" key="7"/>
<organism>
    <name type="scientific">Canis lupus familiaris</name>
    <name type="common">Dog</name>
    <name type="synonym">Canis familiaris</name>
    <dbReference type="NCBI Taxonomy" id="9615"/>
    <lineage>
        <taxon>Eukaryota</taxon>
        <taxon>Metazoa</taxon>
        <taxon>Chordata</taxon>
        <taxon>Craniata</taxon>
        <taxon>Vertebrata</taxon>
        <taxon>Euteleostomi</taxon>
        <taxon>Mammalia</taxon>
        <taxon>Eutheria</taxon>
        <taxon>Laurasiatheria</taxon>
        <taxon>Carnivora</taxon>
        <taxon>Caniformia</taxon>
        <taxon>Canidae</taxon>
        <taxon>Canis</taxon>
    </lineage>
</organism>
<accession>Q9XST2</accession>
<feature type="chain" id="PRO_0000050362" description="Solute carrier family 2, facilitated glucose transporter member 4">
    <location>
        <begin position="1" status="less than"/>
        <end position="162" status="greater than"/>
    </location>
</feature>
<feature type="topological domain" description="Extracellular" evidence="5">
    <location>
        <begin position="1" status="less than"/>
        <end position="13"/>
    </location>
</feature>
<feature type="transmembrane region" description="Helical; Name=8" evidence="5">
    <location>
        <begin position="14"/>
        <end position="34"/>
    </location>
</feature>
<feature type="topological domain" description="Cytoplasmic" evidence="5">
    <location>
        <begin position="35"/>
        <end position="43"/>
    </location>
</feature>
<feature type="transmembrane region" description="Helical; Name=9" evidence="5">
    <location>
        <begin position="44"/>
        <end position="64"/>
    </location>
</feature>
<feature type="topological domain" description="Extracellular" evidence="5">
    <location>
        <begin position="65"/>
        <end position="75"/>
    </location>
</feature>
<feature type="transmembrane region" description="Helical; Name=10" evidence="5">
    <location>
        <begin position="76"/>
        <end position="96"/>
    </location>
</feature>
<feature type="topological domain" description="Cytoplasmic" evidence="5">
    <location>
        <begin position="97"/>
        <end position="107"/>
    </location>
</feature>
<feature type="transmembrane region" description="Helical; Name=11" evidence="5">
    <location>
        <begin position="108"/>
        <end position="128"/>
    </location>
</feature>
<feature type="topological domain" description="Extracellular" evidence="5">
    <location>
        <begin position="129"/>
        <end position="135"/>
    </location>
</feature>
<feature type="transmembrane region" description="Helical; Name=12" evidence="5">
    <location>
        <begin position="136"/>
        <end position="156"/>
    </location>
</feature>
<feature type="topological domain" description="Cytoplasmic" evidence="5">
    <location>
        <begin position="157"/>
        <end position="162" status="greater than"/>
    </location>
</feature>
<feature type="binding site" evidence="1">
    <location>
        <position position="23"/>
    </location>
    <ligand>
        <name>D-glucose</name>
        <dbReference type="ChEBI" id="CHEBI:4167"/>
    </ligand>
</feature>
<feature type="binding site" evidence="1">
    <location>
        <position position="86"/>
    </location>
    <ligand>
        <name>D-glucose</name>
        <dbReference type="ChEBI" id="CHEBI:4167"/>
    </ligand>
</feature>
<feature type="binding site" evidence="1">
    <location>
        <position position="94"/>
    </location>
    <ligand>
        <name>D-glucose</name>
        <dbReference type="ChEBI" id="CHEBI:4167"/>
    </ligand>
</feature>
<feature type="non-terminal residue">
    <location>
        <position position="1"/>
    </location>
</feature>
<feature type="non-terminal residue">
    <location>
        <position position="162"/>
    </location>
</feature>
<protein>
    <recommendedName>
        <fullName evidence="7">Solute carrier family 2, facilitated glucose transporter member 4</fullName>
    </recommendedName>
    <alternativeName>
        <fullName evidence="3">Glucose transporter type 4, insulin-responsive</fullName>
        <shortName evidence="3">GLUT-4</shortName>
    </alternativeName>
</protein>
<proteinExistence type="evidence at transcript level"/>
<gene>
    <name evidence="3" type="primary">SLC2A4</name>
    <name evidence="3" type="synonym">GLUT4</name>
    <name evidence="6" type="ORF">B146</name>
</gene>
<reference key="1">
    <citation type="journal article" date="2000" name="Anal. Biochem.">
        <title>A method for the large-scale cloning of nuclear proteins and nuclear targeting sequences on a functional basis.</title>
        <authorList>
            <person name="Pichon B."/>
            <person name="Mercan D."/>
            <person name="Pouillon V."/>
            <person name="Christophe-Hobertus C."/>
            <person name="Christophe D."/>
        </authorList>
    </citation>
    <scope>NUCLEOTIDE SEQUENCE [LARGE SCALE MRNA]</scope>
    <source>
        <tissue>Thyroid</tissue>
    </source>
</reference>
<name>GLUT4_CANLF</name>